<gene>
    <name evidence="7" type="primary">odh1</name>
</gene>
<sequence length="399" mass="43320">MTVKVCVCGGGNGAHTLSGLAASRDGVEVRVLTLFADEAERWTKALGADELTVIVNEKDGTQTEVKSRPKVITKDPEIAISGADVVILTVPAFAHEGYFQAMAPYVQDSALIVGLPSQAGFEFQCRDILGDKAAAVSMMSFETLPWACRIKEFGRKVEVLGTKSVLAASLIKGTAKTVDPLSTLQMLHGAEPVFRLAKHFLEMLIMSYSFVHPAILFGRWGSWDGKPVPEAPLFYQGIDQATADMLTACSNECKDVANAIMAACPGNDLSDVKDIYQWYLEYYHEDIQDDHDLYHAITTNKSYKGLVHPVKAVDGGVAPDFGNRYLTEDIPMGMIVFKGVAIAAGVAIPSNDKLIMWAQEKIGKEYLVDGALTGKDVATTRCPQRYGFNTLDAILTGKK</sequence>
<reference evidence="6 7" key="1">
    <citation type="journal article" date="2007" name="FEBS J.">
        <title>Putative reaction mechanism of heterologously expressed octopine dehydrogenase from the great scallop, Pecten maximus (L).</title>
        <authorList>
            <person name="Muller A."/>
            <person name="Janssen F."/>
            <person name="Grieshaber M.K."/>
        </authorList>
    </citation>
    <scope>NUCLEOTIDE SEQUENCE [MRNA]</scope>
    <scope>FUNCTION</scope>
    <scope>CATALYTIC ACTIVITY</scope>
    <scope>BIOPHYSICOCHEMICAL PROPERTIES</scope>
    <scope>MUTAGENESIS OF CYS-148; HIS-212; ARG-324 AND ASP-329</scope>
    <source>
        <tissue evidence="2">Adductor muscle</tissue>
    </source>
</reference>
<reference evidence="6 8" key="2">
    <citation type="journal article" date="2008" name="J. Mol. Biol.">
        <title>A structural basis for substrate selectivity and stereoselectivity in octopine dehydrogenase from Pecten maximus.</title>
        <authorList>
            <person name="Smits S.H."/>
            <person name="Mueller A."/>
            <person name="Schmitt L."/>
            <person name="Grieshaber M.K."/>
        </authorList>
    </citation>
    <scope>X-RAY CRYSTALLOGRAPHY (2.10 ANGSTROMS) OF NATIVE PROTEIN AND IN COMPLEXES WITH L-ARGININE; NADH AND PYRUVATE</scope>
    <scope>FUNCTION</scope>
    <scope>BIOPHYSICOCHEMICAL PROPERTIES</scope>
    <scope>MUTAGENESIS OF GLN-118</scope>
</reference>
<reference evidence="6 9" key="3">
    <citation type="journal article" date="2010" name="PLoS ONE">
        <title>Insights into the mechanism of ligand binding to octopine dehydrogenase from Pecten maximus by NMR and crystallography.</title>
        <authorList>
            <person name="Smits S.H."/>
            <person name="Meyer T."/>
            <person name="Mueller A."/>
            <person name="van Os N."/>
            <person name="Stoldt M."/>
            <person name="Willbold D."/>
            <person name="Schmitt L."/>
            <person name="Grieshaber M.K."/>
        </authorList>
    </citation>
    <scope>X-RAY CRYSTALLOGRAPHY (2.80 ANGSTROMS) IN COMPLEX WITH NADH AND AGMATINE</scope>
    <scope>ACTIVITY REGULATION</scope>
</reference>
<feature type="chain" id="PRO_0000414626" description="Octopine dehydrogenase">
    <location>
        <begin position="1"/>
        <end position="399"/>
    </location>
</feature>
<feature type="active site" evidence="3">
    <location>
        <position position="212"/>
    </location>
</feature>
<feature type="binding site" evidence="3 4">
    <location>
        <begin position="10"/>
        <end position="13"/>
    </location>
    <ligand>
        <name>NADH</name>
        <dbReference type="ChEBI" id="CHEBI:57945"/>
    </ligand>
</feature>
<feature type="binding site" evidence="3 4">
    <location>
        <begin position="35"/>
        <end position="38"/>
    </location>
    <ligand>
        <name>NADH</name>
        <dbReference type="ChEBI" id="CHEBI:57945"/>
    </ligand>
</feature>
<feature type="binding site" evidence="3">
    <location>
        <position position="118"/>
    </location>
    <ligand>
        <name>pyruvate</name>
        <dbReference type="ChEBI" id="CHEBI:15361"/>
    </ligand>
</feature>
<feature type="binding site">
    <location>
        <position position="118"/>
    </location>
    <ligand>
        <name>substrate</name>
    </ligand>
</feature>
<feature type="binding site" evidence="3">
    <location>
        <position position="143"/>
    </location>
    <ligand>
        <name>pyruvate</name>
        <dbReference type="ChEBI" id="CHEBI:15361"/>
    </ligand>
</feature>
<feature type="binding site" evidence="4">
    <location>
        <position position="148"/>
    </location>
    <ligand>
        <name>NAD(+)</name>
        <dbReference type="ChEBI" id="CHEBI:57540"/>
    </ligand>
</feature>
<feature type="binding site" evidence="3">
    <location>
        <position position="206"/>
    </location>
    <ligand>
        <name>L-arginine</name>
        <dbReference type="ChEBI" id="CHEBI:32682"/>
    </ligand>
</feature>
<feature type="binding site" evidence="3">
    <location>
        <position position="212"/>
    </location>
    <ligand>
        <name>pyruvate</name>
        <dbReference type="ChEBI" id="CHEBI:15361"/>
    </ligand>
</feature>
<feature type="binding site" evidence="4">
    <location>
        <position position="324"/>
    </location>
    <ligand>
        <name>NAD(+)</name>
        <dbReference type="ChEBI" id="CHEBI:57540"/>
    </ligand>
</feature>
<feature type="mutagenesis site" description="Drastically reduced enzymatic activity." evidence="3">
    <original>Q</original>
    <variation>A</variation>
    <location>
        <position position="118"/>
    </location>
</feature>
<feature type="mutagenesis site" description="Drastically reduced enzymatic activity. Greater effect on catalytic efficiency for pyruvate than L-arginine or NADH." evidence="3">
    <original>Q</original>
    <variation>D</variation>
    <location>
        <position position="118"/>
    </location>
</feature>
<feature type="mutagenesis site" description="Reduced catalytic efficiency but no change in the activity. 3-fold decrease in affinity for pyruvate, 3-fold decrease for L-arginine and 2-fold decrease for NADH." evidence="2">
    <original>C</original>
    <variation>A</variation>
    <variation>S</variation>
    <location>
        <position position="148"/>
    </location>
</feature>
<feature type="mutagenesis site" description="2 to 10-fold decrease in specific activity. 77-fold reduction in affinity for pyruvate, 6-fold decrease for L-arginine and 3-fold decrease for NADH." evidence="2">
    <original>H</original>
    <variation>A</variation>
    <location>
        <position position="212"/>
    </location>
</feature>
<feature type="mutagenesis site" description="2 to 10-fold decrease in specific activity. 119-fold reduction in affinity for pyruvate, 200-fold reduction for L-arginine and 4-fold reduction for NADH." evidence="2">
    <original>R</original>
    <variation>A</variation>
    <location>
        <position position="324"/>
    </location>
</feature>
<feature type="mutagenesis site" description="2 to 10-fold decrease in specific activity. 43-fold reduction in affinity for pyruvate and 18-fold reduction for L-arginine." evidence="2">
    <original>D</original>
    <variation>A</variation>
    <location>
        <position position="329"/>
    </location>
</feature>
<feature type="strand" evidence="10">
    <location>
        <begin position="3"/>
        <end position="8"/>
    </location>
</feature>
<feature type="helix" evidence="10">
    <location>
        <begin position="12"/>
        <end position="21"/>
    </location>
</feature>
<feature type="strand" evidence="10">
    <location>
        <begin position="27"/>
        <end position="32"/>
    </location>
</feature>
<feature type="helix" evidence="10">
    <location>
        <begin position="38"/>
        <end position="46"/>
    </location>
</feature>
<feature type="strand" evidence="10">
    <location>
        <begin position="51"/>
        <end position="56"/>
    </location>
</feature>
<feature type="strand" evidence="10">
    <location>
        <begin position="58"/>
        <end position="60"/>
    </location>
</feature>
<feature type="strand" evidence="10">
    <location>
        <begin position="62"/>
        <end position="67"/>
    </location>
</feature>
<feature type="strand" evidence="10">
    <location>
        <begin position="70"/>
        <end position="74"/>
    </location>
</feature>
<feature type="helix" evidence="10">
    <location>
        <begin position="76"/>
        <end position="80"/>
    </location>
</feature>
<feature type="strand" evidence="10">
    <location>
        <begin position="84"/>
        <end position="88"/>
    </location>
</feature>
<feature type="helix" evidence="10">
    <location>
        <begin position="92"/>
        <end position="94"/>
    </location>
</feature>
<feature type="helix" evidence="10">
    <location>
        <begin position="95"/>
        <end position="102"/>
    </location>
</feature>
<feature type="turn" evidence="10">
    <location>
        <begin position="103"/>
        <end position="105"/>
    </location>
</feature>
<feature type="strand" evidence="10">
    <location>
        <begin position="111"/>
        <end position="114"/>
    </location>
</feature>
<feature type="helix" evidence="10">
    <location>
        <begin position="121"/>
        <end position="129"/>
    </location>
</feature>
<feature type="helix" evidence="10">
    <location>
        <begin position="130"/>
        <end position="134"/>
    </location>
</feature>
<feature type="strand" evidence="10">
    <location>
        <begin position="136"/>
        <end position="143"/>
    </location>
</feature>
<feature type="strand" evidence="10">
    <location>
        <begin position="145"/>
        <end position="152"/>
    </location>
</feature>
<feature type="turn" evidence="10">
    <location>
        <begin position="153"/>
        <end position="155"/>
    </location>
</feature>
<feature type="strand" evidence="10">
    <location>
        <begin position="156"/>
        <end position="162"/>
    </location>
</feature>
<feature type="strand" evidence="10">
    <location>
        <begin position="164"/>
        <end position="171"/>
    </location>
</feature>
<feature type="helix" evidence="10">
    <location>
        <begin position="180"/>
        <end position="188"/>
    </location>
</feature>
<feature type="strand" evidence="10">
    <location>
        <begin position="190"/>
        <end position="196"/>
    </location>
</feature>
<feature type="helix" evidence="10">
    <location>
        <begin position="200"/>
        <end position="205"/>
    </location>
</feature>
<feature type="helix" evidence="10">
    <location>
        <begin position="211"/>
        <end position="220"/>
    </location>
</feature>
<feature type="strand" evidence="10">
    <location>
        <begin position="228"/>
        <end position="230"/>
    </location>
</feature>
<feature type="helix" evidence="10">
    <location>
        <begin position="235"/>
        <end position="237"/>
    </location>
</feature>
<feature type="helix" evidence="10">
    <location>
        <begin position="240"/>
        <end position="263"/>
    </location>
</feature>
<feature type="helix" evidence="10">
    <location>
        <begin position="275"/>
        <end position="282"/>
    </location>
</feature>
<feature type="turn" evidence="10">
    <location>
        <begin position="284"/>
        <end position="286"/>
    </location>
</feature>
<feature type="helix" evidence="10">
    <location>
        <begin position="293"/>
        <end position="298"/>
    </location>
</feature>
<feature type="helix" evidence="10">
    <location>
        <begin position="301"/>
        <end position="303"/>
    </location>
</feature>
<feature type="strand" evidence="10">
    <location>
        <begin position="310"/>
        <end position="313"/>
    </location>
</feature>
<feature type="strand" evidence="10">
    <location>
        <begin position="316"/>
        <end position="319"/>
    </location>
</feature>
<feature type="turn" evidence="10">
    <location>
        <begin position="325"/>
        <end position="333"/>
    </location>
</feature>
<feature type="helix" evidence="10">
    <location>
        <begin position="334"/>
        <end position="344"/>
    </location>
</feature>
<feature type="helix" evidence="10">
    <location>
        <begin position="349"/>
        <end position="362"/>
    </location>
</feature>
<feature type="helix" evidence="10">
    <location>
        <begin position="377"/>
        <end position="379"/>
    </location>
</feature>
<feature type="helix" evidence="10">
    <location>
        <begin position="383"/>
        <end position="386"/>
    </location>
</feature>
<feature type="helix" evidence="10">
    <location>
        <begin position="391"/>
        <end position="396"/>
    </location>
</feature>
<evidence type="ECO:0000255" key="1"/>
<evidence type="ECO:0000269" key="2">
    <source>
    </source>
</evidence>
<evidence type="ECO:0000269" key="3">
    <source>
    </source>
</evidence>
<evidence type="ECO:0000269" key="4">
    <source>
    </source>
</evidence>
<evidence type="ECO:0000303" key="5">
    <source>
    </source>
</evidence>
<evidence type="ECO:0000305" key="6"/>
<evidence type="ECO:0000312" key="7">
    <source>
        <dbReference type="EMBL" id="CAC36305.1"/>
    </source>
</evidence>
<evidence type="ECO:0000312" key="8">
    <source>
        <dbReference type="PDB" id="3C7A"/>
    </source>
</evidence>
<evidence type="ECO:0000312" key="9">
    <source>
        <dbReference type="PDB" id="3IQD"/>
    </source>
</evidence>
<evidence type="ECO:0007829" key="10">
    <source>
        <dbReference type="PDB" id="3C7A"/>
    </source>
</evidence>
<proteinExistence type="evidence at protein level"/>
<protein>
    <recommendedName>
        <fullName evidence="7">Octopine dehydrogenase</fullName>
        <shortName evidence="5">OcDH</shortName>
        <ecNumber evidence="7">1.5.1.11</ecNumber>
    </recommendedName>
</protein>
<accession>Q9BHM6</accession>
<organism>
    <name type="scientific">Pecten maximus</name>
    <name type="common">King scallop</name>
    <name type="synonym">Pilgrim's clam</name>
    <dbReference type="NCBI Taxonomy" id="6579"/>
    <lineage>
        <taxon>Eukaryota</taxon>
        <taxon>Metazoa</taxon>
        <taxon>Spiralia</taxon>
        <taxon>Lophotrochozoa</taxon>
        <taxon>Mollusca</taxon>
        <taxon>Bivalvia</taxon>
        <taxon>Autobranchia</taxon>
        <taxon>Pteriomorphia</taxon>
        <taxon>Pectinida</taxon>
        <taxon>Pectinoidea</taxon>
        <taxon>Pectinidae</taxon>
        <taxon>Pecten</taxon>
    </lineage>
</organism>
<dbReference type="EC" id="1.5.1.11" evidence="7"/>
<dbReference type="EMBL" id="AJ237916">
    <property type="protein sequence ID" value="CAC36305.1"/>
    <property type="molecule type" value="mRNA"/>
</dbReference>
<dbReference type="PDB" id="3C7A">
    <property type="method" value="X-ray"/>
    <property type="resolution" value="2.10 A"/>
    <property type="chains" value="A=1-399"/>
</dbReference>
<dbReference type="PDB" id="3C7C">
    <property type="method" value="X-ray"/>
    <property type="resolution" value="3.10 A"/>
    <property type="chains" value="B=1-399"/>
</dbReference>
<dbReference type="PDB" id="3C7D">
    <property type="method" value="X-ray"/>
    <property type="resolution" value="2.50 A"/>
    <property type="chains" value="B=1-399"/>
</dbReference>
<dbReference type="PDB" id="3IQD">
    <property type="method" value="X-ray"/>
    <property type="resolution" value="2.80 A"/>
    <property type="chains" value="B=1-399"/>
</dbReference>
<dbReference type="PDBsum" id="3C7A"/>
<dbReference type="PDBsum" id="3C7C"/>
<dbReference type="PDBsum" id="3C7D"/>
<dbReference type="PDBsum" id="3IQD"/>
<dbReference type="SMR" id="Q9BHM6"/>
<dbReference type="KEGG" id="ag:CAC36305"/>
<dbReference type="OrthoDB" id="6058913at2759"/>
<dbReference type="BioCyc" id="MetaCyc:MONOMER-17683"/>
<dbReference type="BRENDA" id="1.5.1.11">
    <property type="organism ID" value="4573"/>
</dbReference>
<dbReference type="EvolutionaryTrace" id="Q9BHM6"/>
<dbReference type="GO" id="GO:0047830">
    <property type="term" value="F:D-octopine dehydrogenase activity"/>
    <property type="evidence" value="ECO:0007669"/>
    <property type="project" value="UniProtKB-EC"/>
</dbReference>
<dbReference type="GO" id="GO:0000166">
    <property type="term" value="F:nucleotide binding"/>
    <property type="evidence" value="ECO:0007669"/>
    <property type="project" value="UniProtKB-KW"/>
</dbReference>
<dbReference type="Gene3D" id="1.10.1040.10">
    <property type="entry name" value="N-(1-d-carboxylethyl)-l-norvaline Dehydrogenase, domain 2"/>
    <property type="match status" value="1"/>
</dbReference>
<dbReference type="Gene3D" id="3.40.50.720">
    <property type="entry name" value="NAD(P)-binding Rossmann-like Domain"/>
    <property type="match status" value="1"/>
</dbReference>
<dbReference type="InterPro" id="IPR008927">
    <property type="entry name" value="6-PGluconate_DH-like_C_sf"/>
</dbReference>
<dbReference type="InterPro" id="IPR013328">
    <property type="entry name" value="6PGD_dom2"/>
</dbReference>
<dbReference type="InterPro" id="IPR036291">
    <property type="entry name" value="NAD(P)-bd_dom_sf"/>
</dbReference>
<dbReference type="InterPro" id="IPR051729">
    <property type="entry name" value="Opine/Lysopine_DH"/>
</dbReference>
<dbReference type="InterPro" id="IPR003421">
    <property type="entry name" value="Opine_DH"/>
</dbReference>
<dbReference type="PANTHER" id="PTHR38015">
    <property type="entry name" value="BLR6086 PROTEIN"/>
    <property type="match status" value="1"/>
</dbReference>
<dbReference type="PANTHER" id="PTHR38015:SF1">
    <property type="entry name" value="OPINE DEHYDROGENASE DOMAIN-CONTAINING PROTEIN"/>
    <property type="match status" value="1"/>
</dbReference>
<dbReference type="Pfam" id="PF02317">
    <property type="entry name" value="Octopine_DH"/>
    <property type="match status" value="1"/>
</dbReference>
<dbReference type="SUPFAM" id="SSF48179">
    <property type="entry name" value="6-phosphogluconate dehydrogenase C-terminal domain-like"/>
    <property type="match status" value="1"/>
</dbReference>
<dbReference type="SUPFAM" id="SSF51735">
    <property type="entry name" value="NAD(P)-binding Rossmann-fold domains"/>
    <property type="match status" value="1"/>
</dbReference>
<comment type="function">
    <text evidence="2 3">Catalyzes the reverse reaction of octopine dehydrogenation. Acts on L-arginine in preference to other substrates such as canavanine, cysteine, L-alanine, ornithine or norvaline, owing to the presence of the positively charged guanidium group.</text>
</comment>
<comment type="catalytic activity">
    <reaction evidence="2">
        <text>D-octopine + NAD(+) + H2O = L-arginine + pyruvate + NADH + H(+)</text>
        <dbReference type="Rhea" id="RHEA:16285"/>
        <dbReference type="ChEBI" id="CHEBI:15361"/>
        <dbReference type="ChEBI" id="CHEBI:15377"/>
        <dbReference type="ChEBI" id="CHEBI:15378"/>
        <dbReference type="ChEBI" id="CHEBI:32682"/>
        <dbReference type="ChEBI" id="CHEBI:57520"/>
        <dbReference type="ChEBI" id="CHEBI:57540"/>
        <dbReference type="ChEBI" id="CHEBI:57945"/>
        <dbReference type="EC" id="1.5.1.11"/>
    </reaction>
</comment>
<comment type="activity regulation">
    <text evidence="4">Agmatine acts as a competitive inhibitor of the condensation reaction where the L-arginine and agmatine substrates compete for the same site.</text>
</comment>
<comment type="biophysicochemical properties">
    <kinetics>
        <KM evidence="2 3">0.8 mM for pyruvate for the reverse reaction of the octopine dehydrogenase activity</KM>
        <KM evidence="2 3">0.5 mM for L-arginine for the reverse reaction of the octopine dehydrogenase activity</KM>
        <KM evidence="2 3">0.0198 mM for NADH for the reverse reaction of the octopine dehydrogenase activity</KM>
        <KM evidence="2 3">5.9 mM for ketobutyrate for the reverse reaction of the octopine dehydrogenase activity</KM>
        <KM evidence="2 3">49.8 mM for ketovalerate for the reverse reaction of the octopine dehydrogenase activity</KM>
        <Vmax evidence="2 3">1074.0 umol/min/mg enzyme with pyruvate as substrate for the reverse reaction of the octopine dehydrogenase activity</Vmax>
        <Vmax evidence="2 3">886.0 umol/min/mg enzyme with L-arginine as substrate for the reverse reaction of the octopine dehydrogenase activity</Vmax>
        <Vmax evidence="2 3">903.0 umol/min/mg enzyme with NADH as substrate for the reverse reaction of the octopine dehydrogenase activity</Vmax>
        <Vmax evidence="2 3">728.0 umol/min/mg enzyme with ketobutyrate as substrate for the reverse reaction of the octopine dehydrogenase activity</Vmax>
        <Vmax evidence="2 3">377.0 umol/min/mg enzyme with ketovalerate as substrate for the reverse reaction of the octopine dehydrogenase activity</Vmax>
        <text evidence="2 3">The kinetic constants are determined for the recombinant His(5)-tagged protein.</text>
    </kinetics>
    <phDependence>
        <text evidence="2 3">Optimum pH is 8.0-9.5 for the forward reaction and 6.5-7.5 for the reverse reaction.</text>
    </phDependence>
</comment>
<comment type="similarity">
    <text evidence="1">Belongs to the lysopine/nopaline/octopine/opine/vitopine dehydrogenases family.</text>
</comment>
<name>OCDH_PECMA</name>
<keyword id="KW-0002">3D-structure</keyword>
<keyword id="KW-0520">NAD</keyword>
<keyword id="KW-0547">Nucleotide-binding</keyword>
<keyword id="KW-0560">Oxidoreductase</keyword>